<comment type="function">
    <text evidence="1">Binds together with bS18 to 16S ribosomal RNA.</text>
</comment>
<comment type="similarity">
    <text evidence="1">Belongs to the bacterial ribosomal protein bS6 family.</text>
</comment>
<keyword id="KW-0007">Acetylation</keyword>
<keyword id="KW-1185">Reference proteome</keyword>
<keyword id="KW-0687">Ribonucleoprotein</keyword>
<keyword id="KW-0689">Ribosomal protein</keyword>
<keyword id="KW-0694">RNA-binding</keyword>
<keyword id="KW-0699">rRNA-binding</keyword>
<gene>
    <name evidence="1" type="primary">rpsF</name>
    <name type="ordered locus">SSON_4383</name>
</gene>
<accession>Q3YUE7</accession>
<reference key="1">
    <citation type="journal article" date="2005" name="Nucleic Acids Res.">
        <title>Genome dynamics and diversity of Shigella species, the etiologic agents of bacillary dysentery.</title>
        <authorList>
            <person name="Yang F."/>
            <person name="Yang J."/>
            <person name="Zhang X."/>
            <person name="Chen L."/>
            <person name="Jiang Y."/>
            <person name="Yan Y."/>
            <person name="Tang X."/>
            <person name="Wang J."/>
            <person name="Xiong Z."/>
            <person name="Dong J."/>
            <person name="Xue Y."/>
            <person name="Zhu Y."/>
            <person name="Xu X."/>
            <person name="Sun L."/>
            <person name="Chen S."/>
            <person name="Nie H."/>
            <person name="Peng J."/>
            <person name="Xu J."/>
            <person name="Wang Y."/>
            <person name="Yuan Z."/>
            <person name="Wen Y."/>
            <person name="Yao Z."/>
            <person name="Shen Y."/>
            <person name="Qiang B."/>
            <person name="Hou Y."/>
            <person name="Yu J."/>
            <person name="Jin Q."/>
        </authorList>
    </citation>
    <scope>NUCLEOTIDE SEQUENCE [LARGE SCALE GENOMIC DNA]</scope>
    <source>
        <strain>Ss046</strain>
    </source>
</reference>
<proteinExistence type="inferred from homology"/>
<evidence type="ECO:0000255" key="1">
    <source>
        <dbReference type="HAMAP-Rule" id="MF_00360"/>
    </source>
</evidence>
<evidence type="ECO:0000256" key="2">
    <source>
        <dbReference type="SAM" id="MobiDB-lite"/>
    </source>
</evidence>
<evidence type="ECO:0000305" key="3"/>
<organism>
    <name type="scientific">Shigella sonnei (strain Ss046)</name>
    <dbReference type="NCBI Taxonomy" id="300269"/>
    <lineage>
        <taxon>Bacteria</taxon>
        <taxon>Pseudomonadati</taxon>
        <taxon>Pseudomonadota</taxon>
        <taxon>Gammaproteobacteria</taxon>
        <taxon>Enterobacterales</taxon>
        <taxon>Enterobacteriaceae</taxon>
        <taxon>Shigella</taxon>
    </lineage>
</organism>
<dbReference type="EMBL" id="CP000038">
    <property type="protein sequence ID" value="AAZ90865.1"/>
    <property type="molecule type" value="Genomic_DNA"/>
</dbReference>
<dbReference type="RefSeq" id="WP_001216676.1">
    <property type="nucleotide sequence ID" value="NC_007384.1"/>
</dbReference>
<dbReference type="SMR" id="Q3YUE7"/>
<dbReference type="GeneID" id="93777623"/>
<dbReference type="KEGG" id="ssn:SSON_4383"/>
<dbReference type="HOGENOM" id="CLU_113441_6_1_6"/>
<dbReference type="Proteomes" id="UP000002529">
    <property type="component" value="Chromosome"/>
</dbReference>
<dbReference type="GO" id="GO:0022627">
    <property type="term" value="C:cytosolic small ribosomal subunit"/>
    <property type="evidence" value="ECO:0007669"/>
    <property type="project" value="TreeGrafter"/>
</dbReference>
<dbReference type="GO" id="GO:0070181">
    <property type="term" value="F:small ribosomal subunit rRNA binding"/>
    <property type="evidence" value="ECO:0007669"/>
    <property type="project" value="TreeGrafter"/>
</dbReference>
<dbReference type="GO" id="GO:0003735">
    <property type="term" value="F:structural constituent of ribosome"/>
    <property type="evidence" value="ECO:0007669"/>
    <property type="project" value="InterPro"/>
</dbReference>
<dbReference type="GO" id="GO:0006412">
    <property type="term" value="P:translation"/>
    <property type="evidence" value="ECO:0007669"/>
    <property type="project" value="UniProtKB-UniRule"/>
</dbReference>
<dbReference type="CDD" id="cd00473">
    <property type="entry name" value="bS6"/>
    <property type="match status" value="1"/>
</dbReference>
<dbReference type="FunFam" id="3.30.70.60:FF:000003">
    <property type="entry name" value="30S ribosomal protein S6"/>
    <property type="match status" value="1"/>
</dbReference>
<dbReference type="Gene3D" id="3.30.70.60">
    <property type="match status" value="1"/>
</dbReference>
<dbReference type="HAMAP" id="MF_00360">
    <property type="entry name" value="Ribosomal_bS6"/>
    <property type="match status" value="1"/>
</dbReference>
<dbReference type="InterPro" id="IPR000529">
    <property type="entry name" value="Ribosomal_bS6"/>
</dbReference>
<dbReference type="InterPro" id="IPR020815">
    <property type="entry name" value="Ribosomal_bS6_CS"/>
</dbReference>
<dbReference type="InterPro" id="IPR035980">
    <property type="entry name" value="Ribosomal_bS6_sf"/>
</dbReference>
<dbReference type="InterPro" id="IPR020814">
    <property type="entry name" value="Ribosomal_S6_plastid/chlpt"/>
</dbReference>
<dbReference type="InterPro" id="IPR014717">
    <property type="entry name" value="Transl_elong_EF1B/ribsomal_bS6"/>
</dbReference>
<dbReference type="NCBIfam" id="TIGR00166">
    <property type="entry name" value="S6"/>
    <property type="match status" value="1"/>
</dbReference>
<dbReference type="PANTHER" id="PTHR21011">
    <property type="entry name" value="MITOCHONDRIAL 28S RIBOSOMAL PROTEIN S6"/>
    <property type="match status" value="1"/>
</dbReference>
<dbReference type="PANTHER" id="PTHR21011:SF1">
    <property type="entry name" value="SMALL RIBOSOMAL SUBUNIT PROTEIN BS6M"/>
    <property type="match status" value="1"/>
</dbReference>
<dbReference type="Pfam" id="PF01250">
    <property type="entry name" value="Ribosomal_S6"/>
    <property type="match status" value="1"/>
</dbReference>
<dbReference type="SUPFAM" id="SSF54995">
    <property type="entry name" value="Ribosomal protein S6"/>
    <property type="match status" value="1"/>
</dbReference>
<dbReference type="PROSITE" id="PS01048">
    <property type="entry name" value="RIBOSOMAL_S6"/>
    <property type="match status" value="1"/>
</dbReference>
<name>RS6_SHISS</name>
<feature type="chain" id="PRO_0000229578" description="Small ribosomal subunit protein bS6">
    <location>
        <begin position="1"/>
        <end position="131"/>
    </location>
</feature>
<feature type="region of interest" description="Disordered" evidence="2">
    <location>
        <begin position="98"/>
        <end position="131"/>
    </location>
</feature>
<feature type="compositionally biased region" description="Basic and acidic residues" evidence="2">
    <location>
        <begin position="104"/>
        <end position="116"/>
    </location>
</feature>
<feature type="compositionally biased region" description="Acidic residues" evidence="2">
    <location>
        <begin position="120"/>
        <end position="131"/>
    </location>
</feature>
<feature type="modified residue" description="N6-acetyllysine" evidence="1">
    <location>
        <position position="93"/>
    </location>
</feature>
<protein>
    <recommendedName>
        <fullName evidence="1">Small ribosomal subunit protein bS6</fullName>
    </recommendedName>
    <alternativeName>
        <fullName evidence="3">30S ribosomal protein S6</fullName>
    </alternativeName>
</protein>
<sequence>MRHYEIVFMVHPDQSEQVPGMIERYTAAITGAEGKIHRLEDWGRRQLAYPINKLHKAHYVLMNVEAPQEVIDELETTFRFNDAVIRSMVMRTKHAVTEASPMVKAKDERRERRDDFANETADDAEAGDSEE</sequence>